<protein>
    <recommendedName>
        <fullName evidence="1">Peptide chain release factor 1</fullName>
        <shortName evidence="1">RF-1</shortName>
    </recommendedName>
</protein>
<feature type="chain" id="PRO_1000004905" description="Peptide chain release factor 1">
    <location>
        <begin position="1"/>
        <end position="357"/>
    </location>
</feature>
<feature type="modified residue" description="N5-methylglutamine" evidence="1">
    <location>
        <position position="234"/>
    </location>
</feature>
<reference key="1">
    <citation type="journal article" date="2006" name="Proc. Natl. Acad. Sci. U.S.A.">
        <title>Comparative genomics of the lactic acid bacteria.</title>
        <authorList>
            <person name="Makarova K.S."/>
            <person name="Slesarev A."/>
            <person name="Wolf Y.I."/>
            <person name="Sorokin A."/>
            <person name="Mirkin B."/>
            <person name="Koonin E.V."/>
            <person name="Pavlov A."/>
            <person name="Pavlova N."/>
            <person name="Karamychev V."/>
            <person name="Polouchine N."/>
            <person name="Shakhova V."/>
            <person name="Grigoriev I."/>
            <person name="Lou Y."/>
            <person name="Rohksar D."/>
            <person name="Lucas S."/>
            <person name="Huang K."/>
            <person name="Goodstein D.M."/>
            <person name="Hawkins T."/>
            <person name="Plengvidhya V."/>
            <person name="Welker D."/>
            <person name="Hughes J."/>
            <person name="Goh Y."/>
            <person name="Benson A."/>
            <person name="Baldwin K."/>
            <person name="Lee J.-H."/>
            <person name="Diaz-Muniz I."/>
            <person name="Dosti B."/>
            <person name="Smeianov V."/>
            <person name="Wechter W."/>
            <person name="Barabote R."/>
            <person name="Lorca G."/>
            <person name="Altermann E."/>
            <person name="Barrangou R."/>
            <person name="Ganesan B."/>
            <person name="Xie Y."/>
            <person name="Rawsthorne H."/>
            <person name="Tamir D."/>
            <person name="Parker C."/>
            <person name="Breidt F."/>
            <person name="Broadbent J.R."/>
            <person name="Hutkins R."/>
            <person name="O'Sullivan D."/>
            <person name="Steele J."/>
            <person name="Unlu G."/>
            <person name="Saier M.H. Jr."/>
            <person name="Klaenhammer T."/>
            <person name="Richardson P."/>
            <person name="Kozyavkin S."/>
            <person name="Weimer B.C."/>
            <person name="Mills D.A."/>
        </authorList>
    </citation>
    <scope>NUCLEOTIDE SEQUENCE [LARGE SCALE GENOMIC DNA]</scope>
    <source>
        <strain>SK11</strain>
    </source>
</reference>
<comment type="function">
    <text evidence="1">Peptide chain release factor 1 directs the termination of translation in response to the peptide chain termination codons UAG and UAA.</text>
</comment>
<comment type="subcellular location">
    <subcellularLocation>
        <location evidence="1">Cytoplasm</location>
    </subcellularLocation>
</comment>
<comment type="PTM">
    <text evidence="1">Methylated by PrmC. Methylation increases the termination efficiency of RF1.</text>
</comment>
<comment type="similarity">
    <text evidence="1">Belongs to the prokaryotic/mitochondrial release factor family.</text>
</comment>
<gene>
    <name evidence="1" type="primary">prfA</name>
    <name type="ordered locus">LACR_0610</name>
</gene>
<dbReference type="EMBL" id="CP000425">
    <property type="protein sequence ID" value="ABJ72178.1"/>
    <property type="molecule type" value="Genomic_DNA"/>
</dbReference>
<dbReference type="RefSeq" id="WP_011675595.1">
    <property type="nucleotide sequence ID" value="NC_008527.1"/>
</dbReference>
<dbReference type="SMR" id="Q031E4"/>
<dbReference type="KEGG" id="llc:LACR_0610"/>
<dbReference type="HOGENOM" id="CLU_036856_0_1_9"/>
<dbReference type="Proteomes" id="UP000000240">
    <property type="component" value="Chromosome"/>
</dbReference>
<dbReference type="GO" id="GO:0005737">
    <property type="term" value="C:cytoplasm"/>
    <property type="evidence" value="ECO:0007669"/>
    <property type="project" value="UniProtKB-SubCell"/>
</dbReference>
<dbReference type="GO" id="GO:0016149">
    <property type="term" value="F:translation release factor activity, codon specific"/>
    <property type="evidence" value="ECO:0007669"/>
    <property type="project" value="UniProtKB-UniRule"/>
</dbReference>
<dbReference type="FunFam" id="3.30.160.20:FF:000027">
    <property type="entry name" value="Peptide chain release factor 1"/>
    <property type="match status" value="1"/>
</dbReference>
<dbReference type="FunFam" id="3.30.70.1660:FF:000002">
    <property type="entry name" value="Peptide chain release factor 1"/>
    <property type="match status" value="1"/>
</dbReference>
<dbReference type="FunFam" id="3.30.70.1660:FF:000004">
    <property type="entry name" value="Peptide chain release factor 1"/>
    <property type="match status" value="1"/>
</dbReference>
<dbReference type="Gene3D" id="3.30.160.20">
    <property type="match status" value="1"/>
</dbReference>
<dbReference type="Gene3D" id="3.30.70.1660">
    <property type="match status" value="2"/>
</dbReference>
<dbReference type="Gene3D" id="6.10.140.1950">
    <property type="match status" value="1"/>
</dbReference>
<dbReference type="HAMAP" id="MF_00093">
    <property type="entry name" value="Rel_fac_1"/>
    <property type="match status" value="1"/>
</dbReference>
<dbReference type="InterPro" id="IPR005139">
    <property type="entry name" value="PCRF"/>
</dbReference>
<dbReference type="InterPro" id="IPR000352">
    <property type="entry name" value="Pep_chain_release_fac_I"/>
</dbReference>
<dbReference type="InterPro" id="IPR045853">
    <property type="entry name" value="Pep_chain_release_fac_I_sf"/>
</dbReference>
<dbReference type="InterPro" id="IPR050057">
    <property type="entry name" value="Prokaryotic/Mito_RF"/>
</dbReference>
<dbReference type="InterPro" id="IPR004373">
    <property type="entry name" value="RF-1"/>
</dbReference>
<dbReference type="NCBIfam" id="TIGR00019">
    <property type="entry name" value="prfA"/>
    <property type="match status" value="1"/>
</dbReference>
<dbReference type="NCBIfam" id="NF001859">
    <property type="entry name" value="PRK00591.1"/>
    <property type="match status" value="1"/>
</dbReference>
<dbReference type="PANTHER" id="PTHR43804">
    <property type="entry name" value="LD18447P"/>
    <property type="match status" value="1"/>
</dbReference>
<dbReference type="PANTHER" id="PTHR43804:SF7">
    <property type="entry name" value="LD18447P"/>
    <property type="match status" value="1"/>
</dbReference>
<dbReference type="Pfam" id="PF03462">
    <property type="entry name" value="PCRF"/>
    <property type="match status" value="1"/>
</dbReference>
<dbReference type="Pfam" id="PF00472">
    <property type="entry name" value="RF-1"/>
    <property type="match status" value="1"/>
</dbReference>
<dbReference type="SMART" id="SM00937">
    <property type="entry name" value="PCRF"/>
    <property type="match status" value="1"/>
</dbReference>
<dbReference type="SUPFAM" id="SSF75620">
    <property type="entry name" value="Release factor"/>
    <property type="match status" value="1"/>
</dbReference>
<dbReference type="PROSITE" id="PS00745">
    <property type="entry name" value="RF_PROK_I"/>
    <property type="match status" value="1"/>
</dbReference>
<name>RF1_LACLS</name>
<accession>Q031E4</accession>
<organism>
    <name type="scientific">Lactococcus lactis subsp. cremoris (strain SK11)</name>
    <dbReference type="NCBI Taxonomy" id="272622"/>
    <lineage>
        <taxon>Bacteria</taxon>
        <taxon>Bacillati</taxon>
        <taxon>Bacillota</taxon>
        <taxon>Bacilli</taxon>
        <taxon>Lactobacillales</taxon>
        <taxon>Streptococcaceae</taxon>
        <taxon>Lactococcus</taxon>
        <taxon>Lactococcus cremoris subsp. cremoris</taxon>
    </lineage>
</organism>
<sequence>MFDQLESIVGRYEELGELLSDPEVVSDTKRFMELSREEADLRDKVATYNEYKKVLETISDSEEMLGEGGLDDEMKEMLKEELSSAKSQKEVLEEEIKILLLPKDPNDGKNIILEIRGAAGGDEAALFAGDLLNMYQHFSESQGWKFEIMEANITGIGGYKEVSALISGPSVYSKLKYESGAHRVQRVPVTETQGRVHTSTATVLVMPEVEEFEMTIEQKDLRVDIYHASGAGGQNVNKVATAVRMVHLPTGIKVEMQEERTQQKNRDKAIKLLNTKVFDYYQQIELDKQNAERKSTVGTGDRSERIRTYNFPQNRVTDHRIGLTLQKLDSILSGKMDEVIDALIVYDQTKKLEELNK</sequence>
<evidence type="ECO:0000255" key="1">
    <source>
        <dbReference type="HAMAP-Rule" id="MF_00093"/>
    </source>
</evidence>
<proteinExistence type="inferred from homology"/>
<keyword id="KW-0963">Cytoplasm</keyword>
<keyword id="KW-0488">Methylation</keyword>
<keyword id="KW-0648">Protein biosynthesis</keyword>